<comment type="function">
    <text evidence="1">Catalyzes the attachment of isoleucine to tRNA(Ile). As IleRS can inadvertently accommodate and process structurally similar amino acids such as valine, to avoid such errors it has two additional distinct tRNA(Ile)-dependent editing activities. One activity is designated as 'pretransfer' editing and involves the hydrolysis of activated Val-AMP. The other activity is designated 'posttransfer' editing and involves deacylation of mischarged Val-tRNA(Ile).</text>
</comment>
<comment type="catalytic activity">
    <reaction evidence="1">
        <text>tRNA(Ile) + L-isoleucine + ATP = L-isoleucyl-tRNA(Ile) + AMP + diphosphate</text>
        <dbReference type="Rhea" id="RHEA:11060"/>
        <dbReference type="Rhea" id="RHEA-COMP:9666"/>
        <dbReference type="Rhea" id="RHEA-COMP:9695"/>
        <dbReference type="ChEBI" id="CHEBI:30616"/>
        <dbReference type="ChEBI" id="CHEBI:33019"/>
        <dbReference type="ChEBI" id="CHEBI:58045"/>
        <dbReference type="ChEBI" id="CHEBI:78442"/>
        <dbReference type="ChEBI" id="CHEBI:78528"/>
        <dbReference type="ChEBI" id="CHEBI:456215"/>
        <dbReference type="EC" id="6.1.1.5"/>
    </reaction>
</comment>
<comment type="cofactor">
    <cofactor evidence="1">
        <name>Zn(2+)</name>
        <dbReference type="ChEBI" id="CHEBI:29105"/>
    </cofactor>
    <text evidence="1">Binds 1 zinc ion per subunit.</text>
</comment>
<comment type="subunit">
    <text evidence="1">Monomer.</text>
</comment>
<comment type="subcellular location">
    <subcellularLocation>
        <location evidence="1">Cytoplasm</location>
    </subcellularLocation>
</comment>
<comment type="domain">
    <text evidence="1">IleRS has two distinct active sites: one for aminoacylation and one for editing. The misactivated valine is translocated from the active site to the editing site, which sterically excludes the correctly activated isoleucine. The single editing site contains two valyl binding pockets, one specific for each substrate (Val-AMP or Val-tRNA(Ile)).</text>
</comment>
<comment type="similarity">
    <text evidence="1">Belongs to the class-I aminoacyl-tRNA synthetase family. IleS type 1 subfamily.</text>
</comment>
<feature type="chain" id="PRO_0000098434" description="Isoleucine--tRNA ligase">
    <location>
        <begin position="1"/>
        <end position="932"/>
    </location>
</feature>
<feature type="short sequence motif" description="'HIGH' region">
    <location>
        <begin position="59"/>
        <end position="69"/>
    </location>
</feature>
<feature type="short sequence motif" description="'KMSKS' region">
    <location>
        <begin position="603"/>
        <end position="607"/>
    </location>
</feature>
<feature type="binding site" evidence="1">
    <location>
        <position position="562"/>
    </location>
    <ligand>
        <name>L-isoleucyl-5'-AMP</name>
        <dbReference type="ChEBI" id="CHEBI:178002"/>
    </ligand>
</feature>
<feature type="binding site" evidence="1">
    <location>
        <position position="606"/>
    </location>
    <ligand>
        <name>ATP</name>
        <dbReference type="ChEBI" id="CHEBI:30616"/>
    </ligand>
</feature>
<feature type="binding site" evidence="1">
    <location>
        <position position="899"/>
    </location>
    <ligand>
        <name>Zn(2+)</name>
        <dbReference type="ChEBI" id="CHEBI:29105"/>
    </ligand>
</feature>
<feature type="binding site" evidence="1">
    <location>
        <position position="902"/>
    </location>
    <ligand>
        <name>Zn(2+)</name>
        <dbReference type="ChEBI" id="CHEBI:29105"/>
    </ligand>
</feature>
<feature type="binding site" evidence="1">
    <location>
        <position position="915"/>
    </location>
    <ligand>
        <name>Zn(2+)</name>
        <dbReference type="ChEBI" id="CHEBI:29105"/>
    </ligand>
</feature>
<feature type="binding site" evidence="1">
    <location>
        <position position="918"/>
    </location>
    <ligand>
        <name>Zn(2+)</name>
        <dbReference type="ChEBI" id="CHEBI:29105"/>
    </ligand>
</feature>
<accession>Q9CKF7</accession>
<proteinExistence type="inferred from homology"/>
<organism>
    <name type="scientific">Pasteurella multocida (strain Pm70)</name>
    <dbReference type="NCBI Taxonomy" id="272843"/>
    <lineage>
        <taxon>Bacteria</taxon>
        <taxon>Pseudomonadati</taxon>
        <taxon>Pseudomonadota</taxon>
        <taxon>Gammaproteobacteria</taxon>
        <taxon>Pasteurellales</taxon>
        <taxon>Pasteurellaceae</taxon>
        <taxon>Pasteurella</taxon>
    </lineage>
</organism>
<name>SYI_PASMU</name>
<sequence length="932" mass="105639">MTVDYKNTLNLPETGFPMRGDLAKREPNMLKSWYEKDLYQKIRQASKGKKSFILHDGPPYANGTIHIGHAVNKILKDIIVKSKTALGYDSPYIPGWDCHGLPIELKVEGLVGKPNQNISAAQFREACRQYAAEQVEGQKKDFIRLGVLGDWDNPYLTMNYHTEANIIRAFGKAVENGHLYKGSKPVHWCLDCASSLAEAEVEYEDKVSPSIYVRFSAVDSDAVLAKFNATDKGTGNISAVIWTTTPWTIPSNRAIAIHENLDYQLVQFNDERVILAKDLVEEVAKAAGVEQVVILGESKGKDLEWLRFQHPFYDFSVPFILGDHVTTDGGTGLVHTAPDHGHDDYIIAQKNGIEMAGLIGNDGLFKADVPFFAGKGVFESNDLVVAKLQEVGAMLKFSKIKHSYPHCWRHKTPIIFRATPQWFIGMEKQGLRQQALSEIKKVRWIPDWGQARIEKMVENRPDWCISRQRTWGVPVALFIHKETEELHPRTVELVEEVAKRVEQKGIQAWWDLDTAELLGADADNYIKVPDTLDVWFDSGSTYYSVVKDRPEFNGQEADMYLEGSDQHRGWFMSSLMLSTATDNKAPYKQVLTHGFTVDGQGRKMSKSIGNIVTPQEVMDKFGGDILRLWVASTDYTGEISVSDEILKRAADAYRRIRNTARFLLANLNGFDPKRDLVKPEEMMVLDRWAVDCAYQAQNEIKDAYDNYQFHAVIQRLMKFCSIEMGSFYLDIIKDRQYTTKADSLARRSCQTALWHIAEALVRWIAPVLSFTADEIWQYIPGERGEFVFTEEFYNGLFALDANEQMNDAYWQQVITLRNEVNRVLEQARNDKIIGAALEAELTIYANDTYAPLLAKLQNELRFVLLTSKAEVKPLADADVAEGEVKGFAVKVVRSANHKCPRCWHYSDSKDAESLCSRCDENVNGQGEVRQFA</sequence>
<keyword id="KW-0030">Aminoacyl-tRNA synthetase</keyword>
<keyword id="KW-0067">ATP-binding</keyword>
<keyword id="KW-0963">Cytoplasm</keyword>
<keyword id="KW-0436">Ligase</keyword>
<keyword id="KW-0479">Metal-binding</keyword>
<keyword id="KW-0547">Nucleotide-binding</keyword>
<keyword id="KW-0648">Protein biosynthesis</keyword>
<keyword id="KW-1185">Reference proteome</keyword>
<keyword id="KW-0862">Zinc</keyword>
<protein>
    <recommendedName>
        <fullName evidence="1">Isoleucine--tRNA ligase</fullName>
        <ecNumber evidence="1">6.1.1.5</ecNumber>
    </recommendedName>
    <alternativeName>
        <fullName evidence="1">Isoleucyl-tRNA synthetase</fullName>
        <shortName evidence="1">IleRS</shortName>
    </alternativeName>
</protein>
<evidence type="ECO:0000255" key="1">
    <source>
        <dbReference type="HAMAP-Rule" id="MF_02002"/>
    </source>
</evidence>
<dbReference type="EC" id="6.1.1.5" evidence="1"/>
<dbReference type="EMBL" id="AE004439">
    <property type="protein sequence ID" value="AAK03746.1"/>
    <property type="molecule type" value="Genomic_DNA"/>
</dbReference>
<dbReference type="RefSeq" id="WP_005757850.1">
    <property type="nucleotide sequence ID" value="NC_002663.1"/>
</dbReference>
<dbReference type="SMR" id="Q9CKF7"/>
<dbReference type="STRING" id="272843.PM1662"/>
<dbReference type="EnsemblBacteria" id="AAK03746">
    <property type="protein sequence ID" value="AAK03746"/>
    <property type="gene ID" value="PM1662"/>
</dbReference>
<dbReference type="GeneID" id="77206583"/>
<dbReference type="KEGG" id="pmu:PM1662"/>
<dbReference type="HOGENOM" id="CLU_001493_7_1_6"/>
<dbReference type="OrthoDB" id="9810365at2"/>
<dbReference type="Proteomes" id="UP000000809">
    <property type="component" value="Chromosome"/>
</dbReference>
<dbReference type="GO" id="GO:0005829">
    <property type="term" value="C:cytosol"/>
    <property type="evidence" value="ECO:0007669"/>
    <property type="project" value="TreeGrafter"/>
</dbReference>
<dbReference type="GO" id="GO:0002161">
    <property type="term" value="F:aminoacyl-tRNA deacylase activity"/>
    <property type="evidence" value="ECO:0007669"/>
    <property type="project" value="InterPro"/>
</dbReference>
<dbReference type="GO" id="GO:0005524">
    <property type="term" value="F:ATP binding"/>
    <property type="evidence" value="ECO:0007669"/>
    <property type="project" value="UniProtKB-UniRule"/>
</dbReference>
<dbReference type="GO" id="GO:0004822">
    <property type="term" value="F:isoleucine-tRNA ligase activity"/>
    <property type="evidence" value="ECO:0007669"/>
    <property type="project" value="UniProtKB-UniRule"/>
</dbReference>
<dbReference type="GO" id="GO:0000049">
    <property type="term" value="F:tRNA binding"/>
    <property type="evidence" value="ECO:0007669"/>
    <property type="project" value="InterPro"/>
</dbReference>
<dbReference type="GO" id="GO:0008270">
    <property type="term" value="F:zinc ion binding"/>
    <property type="evidence" value="ECO:0007669"/>
    <property type="project" value="UniProtKB-UniRule"/>
</dbReference>
<dbReference type="GO" id="GO:0006428">
    <property type="term" value="P:isoleucyl-tRNA aminoacylation"/>
    <property type="evidence" value="ECO:0007669"/>
    <property type="project" value="UniProtKB-UniRule"/>
</dbReference>
<dbReference type="CDD" id="cd07960">
    <property type="entry name" value="Anticodon_Ia_Ile_BEm"/>
    <property type="match status" value="1"/>
</dbReference>
<dbReference type="CDD" id="cd00818">
    <property type="entry name" value="IleRS_core"/>
    <property type="match status" value="1"/>
</dbReference>
<dbReference type="FunFam" id="1.10.730.20:FF:000001">
    <property type="entry name" value="Isoleucine--tRNA ligase"/>
    <property type="match status" value="1"/>
</dbReference>
<dbReference type="FunFam" id="3.40.50.620:FF:000042">
    <property type="entry name" value="Isoleucine--tRNA ligase"/>
    <property type="match status" value="1"/>
</dbReference>
<dbReference type="FunFam" id="3.40.50.620:FF:000048">
    <property type="entry name" value="Isoleucine--tRNA ligase"/>
    <property type="match status" value="1"/>
</dbReference>
<dbReference type="Gene3D" id="1.10.730.20">
    <property type="match status" value="1"/>
</dbReference>
<dbReference type="Gene3D" id="3.40.50.620">
    <property type="entry name" value="HUPs"/>
    <property type="match status" value="2"/>
</dbReference>
<dbReference type="Gene3D" id="3.90.740.10">
    <property type="entry name" value="Valyl/Leucyl/Isoleucyl-tRNA synthetase, editing domain"/>
    <property type="match status" value="1"/>
</dbReference>
<dbReference type="HAMAP" id="MF_02002">
    <property type="entry name" value="Ile_tRNA_synth_type1"/>
    <property type="match status" value="1"/>
</dbReference>
<dbReference type="InterPro" id="IPR001412">
    <property type="entry name" value="aa-tRNA-synth_I_CS"/>
</dbReference>
<dbReference type="InterPro" id="IPR002300">
    <property type="entry name" value="aa-tRNA-synth_Ia"/>
</dbReference>
<dbReference type="InterPro" id="IPR033708">
    <property type="entry name" value="Anticodon_Ile_BEm"/>
</dbReference>
<dbReference type="InterPro" id="IPR002301">
    <property type="entry name" value="Ile-tRNA-ligase"/>
</dbReference>
<dbReference type="InterPro" id="IPR023585">
    <property type="entry name" value="Ile-tRNA-ligase_type1"/>
</dbReference>
<dbReference type="InterPro" id="IPR050081">
    <property type="entry name" value="Ile-tRNA_ligase"/>
</dbReference>
<dbReference type="InterPro" id="IPR013155">
    <property type="entry name" value="M/V/L/I-tRNA-synth_anticd-bd"/>
</dbReference>
<dbReference type="InterPro" id="IPR014729">
    <property type="entry name" value="Rossmann-like_a/b/a_fold"/>
</dbReference>
<dbReference type="InterPro" id="IPR009080">
    <property type="entry name" value="tRNAsynth_Ia_anticodon-bd"/>
</dbReference>
<dbReference type="InterPro" id="IPR009008">
    <property type="entry name" value="Val/Leu/Ile-tRNA-synth_edit"/>
</dbReference>
<dbReference type="NCBIfam" id="TIGR00392">
    <property type="entry name" value="ileS"/>
    <property type="match status" value="1"/>
</dbReference>
<dbReference type="PANTHER" id="PTHR42765:SF1">
    <property type="entry name" value="ISOLEUCINE--TRNA LIGASE, MITOCHONDRIAL"/>
    <property type="match status" value="1"/>
</dbReference>
<dbReference type="PANTHER" id="PTHR42765">
    <property type="entry name" value="SOLEUCYL-TRNA SYNTHETASE"/>
    <property type="match status" value="1"/>
</dbReference>
<dbReference type="Pfam" id="PF08264">
    <property type="entry name" value="Anticodon_1"/>
    <property type="match status" value="1"/>
</dbReference>
<dbReference type="Pfam" id="PF00133">
    <property type="entry name" value="tRNA-synt_1"/>
    <property type="match status" value="1"/>
</dbReference>
<dbReference type="PRINTS" id="PR00984">
    <property type="entry name" value="TRNASYNTHILE"/>
</dbReference>
<dbReference type="SUPFAM" id="SSF47323">
    <property type="entry name" value="Anticodon-binding domain of a subclass of class I aminoacyl-tRNA synthetases"/>
    <property type="match status" value="1"/>
</dbReference>
<dbReference type="SUPFAM" id="SSF52374">
    <property type="entry name" value="Nucleotidylyl transferase"/>
    <property type="match status" value="1"/>
</dbReference>
<dbReference type="SUPFAM" id="SSF50677">
    <property type="entry name" value="ValRS/IleRS/LeuRS editing domain"/>
    <property type="match status" value="1"/>
</dbReference>
<dbReference type="PROSITE" id="PS00178">
    <property type="entry name" value="AA_TRNA_LIGASE_I"/>
    <property type="match status" value="1"/>
</dbReference>
<gene>
    <name evidence="1" type="primary">ileS</name>
    <name type="ordered locus">PM1662</name>
</gene>
<reference key="1">
    <citation type="journal article" date="2001" name="Proc. Natl. Acad. Sci. U.S.A.">
        <title>Complete genomic sequence of Pasteurella multocida Pm70.</title>
        <authorList>
            <person name="May B.J."/>
            <person name="Zhang Q."/>
            <person name="Li L.L."/>
            <person name="Paustian M.L."/>
            <person name="Whittam T.S."/>
            <person name="Kapur V."/>
        </authorList>
    </citation>
    <scope>NUCLEOTIDE SEQUENCE [LARGE SCALE GENOMIC DNA]</scope>
    <source>
        <strain>Pm70</strain>
    </source>
</reference>